<organism>
    <name type="scientific">Anaeromyxobacter dehalogenans (strain 2CP-1 / ATCC BAA-258)</name>
    <dbReference type="NCBI Taxonomy" id="455488"/>
    <lineage>
        <taxon>Bacteria</taxon>
        <taxon>Pseudomonadati</taxon>
        <taxon>Myxococcota</taxon>
        <taxon>Myxococcia</taxon>
        <taxon>Myxococcales</taxon>
        <taxon>Cystobacterineae</taxon>
        <taxon>Anaeromyxobacteraceae</taxon>
        <taxon>Anaeromyxobacter</taxon>
    </lineage>
</organism>
<comment type="function">
    <text evidence="1">Produces ATP from ADP in the presence of a proton gradient across the membrane. The V-type alpha chain is a catalytic subunit.</text>
</comment>
<comment type="catalytic activity">
    <reaction evidence="1">
        <text>ATP + H2O + 4 H(+)(in) = ADP + phosphate + 5 H(+)(out)</text>
        <dbReference type="Rhea" id="RHEA:57720"/>
        <dbReference type="ChEBI" id="CHEBI:15377"/>
        <dbReference type="ChEBI" id="CHEBI:15378"/>
        <dbReference type="ChEBI" id="CHEBI:30616"/>
        <dbReference type="ChEBI" id="CHEBI:43474"/>
        <dbReference type="ChEBI" id="CHEBI:456216"/>
        <dbReference type="EC" id="7.1.2.2"/>
    </reaction>
</comment>
<comment type="similarity">
    <text evidence="1">Belongs to the ATPase alpha/beta chains family.</text>
</comment>
<name>VATA_ANAD2</name>
<keyword id="KW-0066">ATP synthesis</keyword>
<keyword id="KW-0067">ATP-binding</keyword>
<keyword id="KW-0375">Hydrogen ion transport</keyword>
<keyword id="KW-0406">Ion transport</keyword>
<keyword id="KW-0547">Nucleotide-binding</keyword>
<keyword id="KW-1278">Translocase</keyword>
<keyword id="KW-0813">Transport</keyword>
<gene>
    <name evidence="1" type="primary">atpA</name>
    <name type="ordered locus">A2cp1_2763</name>
</gene>
<protein>
    <recommendedName>
        <fullName evidence="1">V-type ATP synthase alpha chain</fullName>
        <ecNumber evidence="1">7.1.2.2</ecNumber>
    </recommendedName>
    <alternativeName>
        <fullName evidence="1">V-ATPase subunit A</fullName>
    </alternativeName>
</protein>
<accession>B8JE35</accession>
<sequence>MSGTLMRMAGPTVVAEGLSGASLNEVVRVGEERLLGEIIRIEGDRATIQVYEETAGLALGEPVEASGEPLAVELGPGLLGSVFDGVQRPLSELAAREGDFLGRGASLPALDRTRAWEFEPAVAPGDRVEGGARLGVARAPGAPDHPVVVPPGVTGRVAEVRGGARRVDEPAVLLEGGATLALLERWPVRRPRPARRRLPPDVPFLTGQRVLDCFFPVSAGGTAVVPGGFGTGKTVLEQSLAKWAAADVVVYVGCGERGNEMSEVLDEFPRLEDPRTGGPLLARTVMIVNTSNMPVAAREASIYTGCAIAEYFRDMGRSVALMIDSTSRWAEALREISARLEEMPGEEGYPTYLASRLARFYERAGRVETLGGAEGAVTMVGAVSPPGGDLSEPVTQCSLRATGALWALSADLAHRRHYPAVDWSVSFTLEGDRLAGWFEREAGDGFGALRDEARKLLQRERELAEVAELVGTESLQDAERLVLESARLLREGFLRQSALDPADATCPPAKAFEMLRLFLEWHRRAGAAVGAGVPLRSILDTGLGARLLRLAQLPAAEVPGAAAALRADLSEALARLEAE</sequence>
<dbReference type="EC" id="7.1.2.2" evidence="1"/>
<dbReference type="EMBL" id="CP001359">
    <property type="protein sequence ID" value="ACL66100.1"/>
    <property type="molecule type" value="Genomic_DNA"/>
</dbReference>
<dbReference type="RefSeq" id="WP_012633861.1">
    <property type="nucleotide sequence ID" value="NC_011891.1"/>
</dbReference>
<dbReference type="SMR" id="B8JE35"/>
<dbReference type="KEGG" id="acp:A2cp1_2763"/>
<dbReference type="HOGENOM" id="CLU_008162_3_1_7"/>
<dbReference type="Proteomes" id="UP000007089">
    <property type="component" value="Chromosome"/>
</dbReference>
<dbReference type="GO" id="GO:0045259">
    <property type="term" value="C:proton-transporting ATP synthase complex"/>
    <property type="evidence" value="ECO:0007669"/>
    <property type="project" value="UniProtKB-ARBA"/>
</dbReference>
<dbReference type="GO" id="GO:0005524">
    <property type="term" value="F:ATP binding"/>
    <property type="evidence" value="ECO:0007669"/>
    <property type="project" value="UniProtKB-UniRule"/>
</dbReference>
<dbReference type="GO" id="GO:0046933">
    <property type="term" value="F:proton-transporting ATP synthase activity, rotational mechanism"/>
    <property type="evidence" value="ECO:0007669"/>
    <property type="project" value="UniProtKB-UniRule"/>
</dbReference>
<dbReference type="GO" id="GO:0046961">
    <property type="term" value="F:proton-transporting ATPase activity, rotational mechanism"/>
    <property type="evidence" value="ECO:0007669"/>
    <property type="project" value="InterPro"/>
</dbReference>
<dbReference type="GO" id="GO:0042777">
    <property type="term" value="P:proton motive force-driven plasma membrane ATP synthesis"/>
    <property type="evidence" value="ECO:0007669"/>
    <property type="project" value="UniProtKB-UniRule"/>
</dbReference>
<dbReference type="CDD" id="cd18111">
    <property type="entry name" value="ATP-synt_V_A-type_alpha_C"/>
    <property type="match status" value="1"/>
</dbReference>
<dbReference type="CDD" id="cd18119">
    <property type="entry name" value="ATP-synt_V_A-type_alpha_N"/>
    <property type="match status" value="1"/>
</dbReference>
<dbReference type="CDD" id="cd01134">
    <property type="entry name" value="V_A-ATPase_A"/>
    <property type="match status" value="1"/>
</dbReference>
<dbReference type="FunFam" id="2.40.30.20:FF:000002">
    <property type="entry name" value="V-type proton ATPase catalytic subunit A"/>
    <property type="match status" value="1"/>
</dbReference>
<dbReference type="Gene3D" id="2.40.30.20">
    <property type="match status" value="1"/>
</dbReference>
<dbReference type="Gene3D" id="2.40.50.100">
    <property type="match status" value="1"/>
</dbReference>
<dbReference type="Gene3D" id="1.10.1140.10">
    <property type="entry name" value="Bovine Mitochondrial F1-atpase, Atp Synthase Beta Chain, Chain D, domain 3"/>
    <property type="match status" value="1"/>
</dbReference>
<dbReference type="Gene3D" id="3.40.50.300">
    <property type="entry name" value="P-loop containing nucleotide triphosphate hydrolases"/>
    <property type="match status" value="1"/>
</dbReference>
<dbReference type="HAMAP" id="MF_00309">
    <property type="entry name" value="ATP_synth_A_arch"/>
    <property type="match status" value="1"/>
</dbReference>
<dbReference type="InterPro" id="IPR055190">
    <property type="entry name" value="ATP-synt_VA_C"/>
</dbReference>
<dbReference type="InterPro" id="IPR031686">
    <property type="entry name" value="ATP-synth_a_Xtn"/>
</dbReference>
<dbReference type="InterPro" id="IPR023366">
    <property type="entry name" value="ATP_synth_asu-like_sf"/>
</dbReference>
<dbReference type="InterPro" id="IPR004100">
    <property type="entry name" value="ATPase_F1/V1/A1_a/bsu_N"/>
</dbReference>
<dbReference type="InterPro" id="IPR036121">
    <property type="entry name" value="ATPase_F1/V1/A1_a/bsu_N_sf"/>
</dbReference>
<dbReference type="InterPro" id="IPR000194">
    <property type="entry name" value="ATPase_F1/V1/A1_a/bsu_nucl-bd"/>
</dbReference>
<dbReference type="InterPro" id="IPR024034">
    <property type="entry name" value="ATPase_F1/V1_b/a_C"/>
</dbReference>
<dbReference type="InterPro" id="IPR027417">
    <property type="entry name" value="P-loop_NTPase"/>
</dbReference>
<dbReference type="InterPro" id="IPR022878">
    <property type="entry name" value="V-ATPase_asu"/>
</dbReference>
<dbReference type="NCBIfam" id="NF003220">
    <property type="entry name" value="PRK04192.1"/>
    <property type="match status" value="1"/>
</dbReference>
<dbReference type="PANTHER" id="PTHR43607:SF1">
    <property type="entry name" value="H(+)-TRANSPORTING TWO-SECTOR ATPASE"/>
    <property type="match status" value="1"/>
</dbReference>
<dbReference type="PANTHER" id="PTHR43607">
    <property type="entry name" value="V-TYPE PROTON ATPASE CATALYTIC SUBUNIT A"/>
    <property type="match status" value="1"/>
</dbReference>
<dbReference type="Pfam" id="PF00006">
    <property type="entry name" value="ATP-synt_ab"/>
    <property type="match status" value="1"/>
</dbReference>
<dbReference type="Pfam" id="PF02874">
    <property type="entry name" value="ATP-synt_ab_N"/>
    <property type="match status" value="1"/>
</dbReference>
<dbReference type="Pfam" id="PF16886">
    <property type="entry name" value="ATP-synt_ab_Xtn"/>
    <property type="match status" value="1"/>
</dbReference>
<dbReference type="Pfam" id="PF22919">
    <property type="entry name" value="ATP-synt_VA_C"/>
    <property type="match status" value="1"/>
</dbReference>
<dbReference type="SUPFAM" id="SSF47917">
    <property type="entry name" value="C-terminal domain of alpha and beta subunits of F1 ATP synthase"/>
    <property type="match status" value="1"/>
</dbReference>
<dbReference type="SUPFAM" id="SSF50615">
    <property type="entry name" value="N-terminal domain of alpha and beta subunits of F1 ATP synthase"/>
    <property type="match status" value="1"/>
</dbReference>
<dbReference type="SUPFAM" id="SSF52540">
    <property type="entry name" value="P-loop containing nucleoside triphosphate hydrolases"/>
    <property type="match status" value="1"/>
</dbReference>
<feature type="chain" id="PRO_1000132880" description="V-type ATP synthase alpha chain">
    <location>
        <begin position="1"/>
        <end position="579"/>
    </location>
</feature>
<feature type="binding site" evidence="1">
    <location>
        <begin position="227"/>
        <end position="234"/>
    </location>
    <ligand>
        <name>ATP</name>
        <dbReference type="ChEBI" id="CHEBI:30616"/>
    </ligand>
</feature>
<evidence type="ECO:0000255" key="1">
    <source>
        <dbReference type="HAMAP-Rule" id="MF_00309"/>
    </source>
</evidence>
<reference key="1">
    <citation type="submission" date="2009-01" db="EMBL/GenBank/DDBJ databases">
        <title>Complete sequence of Anaeromyxobacter dehalogenans 2CP-1.</title>
        <authorList>
            <person name="Lucas S."/>
            <person name="Copeland A."/>
            <person name="Lapidus A."/>
            <person name="Glavina del Rio T."/>
            <person name="Dalin E."/>
            <person name="Tice H."/>
            <person name="Bruce D."/>
            <person name="Goodwin L."/>
            <person name="Pitluck S."/>
            <person name="Saunders E."/>
            <person name="Brettin T."/>
            <person name="Detter J.C."/>
            <person name="Han C."/>
            <person name="Larimer F."/>
            <person name="Land M."/>
            <person name="Hauser L."/>
            <person name="Kyrpides N."/>
            <person name="Ovchinnikova G."/>
            <person name="Beliaev A.S."/>
            <person name="Richardson P."/>
        </authorList>
    </citation>
    <scope>NUCLEOTIDE SEQUENCE [LARGE SCALE GENOMIC DNA]</scope>
    <source>
        <strain>2CP-1 / ATCC BAA-258</strain>
    </source>
</reference>
<proteinExistence type="inferred from homology"/>